<keyword id="KW-0058">Aromatic hydrocarbons catabolism</keyword>
<keyword id="KW-0456">Lyase</keyword>
<keyword id="KW-0464">Manganese</keyword>
<keyword id="KW-0479">Metal-binding</keyword>
<dbReference type="EC" id="4.1.3.39" evidence="1"/>
<dbReference type="EMBL" id="CP000125">
    <property type="protein sequence ID" value="ABA52014.1"/>
    <property type="molecule type" value="Genomic_DNA"/>
</dbReference>
<dbReference type="SMR" id="Q3JK55"/>
<dbReference type="EnsemblBacteria" id="ABA52014">
    <property type="protein sequence ID" value="ABA52014"/>
    <property type="gene ID" value="BURPS1710b_A0890"/>
</dbReference>
<dbReference type="KEGG" id="bpm:BURPS1710b_A0890"/>
<dbReference type="HOGENOM" id="CLU_049173_0_0_4"/>
<dbReference type="Proteomes" id="UP000002700">
    <property type="component" value="Chromosome II"/>
</dbReference>
<dbReference type="GO" id="GO:0003852">
    <property type="term" value="F:2-isopropylmalate synthase activity"/>
    <property type="evidence" value="ECO:0007669"/>
    <property type="project" value="TreeGrafter"/>
</dbReference>
<dbReference type="GO" id="GO:0008701">
    <property type="term" value="F:4-hydroxy-2-oxovalerate aldolase activity"/>
    <property type="evidence" value="ECO:0007669"/>
    <property type="project" value="UniProtKB-UniRule"/>
</dbReference>
<dbReference type="GO" id="GO:0030145">
    <property type="term" value="F:manganese ion binding"/>
    <property type="evidence" value="ECO:0007669"/>
    <property type="project" value="UniProtKB-UniRule"/>
</dbReference>
<dbReference type="GO" id="GO:0009056">
    <property type="term" value="P:catabolic process"/>
    <property type="evidence" value="ECO:0007669"/>
    <property type="project" value="UniProtKB-KW"/>
</dbReference>
<dbReference type="GO" id="GO:0009098">
    <property type="term" value="P:L-leucine biosynthetic process"/>
    <property type="evidence" value="ECO:0007669"/>
    <property type="project" value="TreeGrafter"/>
</dbReference>
<dbReference type="CDD" id="cd07943">
    <property type="entry name" value="DRE_TIM_HOA"/>
    <property type="match status" value="1"/>
</dbReference>
<dbReference type="Gene3D" id="1.10.8.60">
    <property type="match status" value="1"/>
</dbReference>
<dbReference type="Gene3D" id="3.20.20.70">
    <property type="entry name" value="Aldolase class I"/>
    <property type="match status" value="1"/>
</dbReference>
<dbReference type="HAMAP" id="MF_01656">
    <property type="entry name" value="HOA"/>
    <property type="match status" value="1"/>
</dbReference>
<dbReference type="InterPro" id="IPR050073">
    <property type="entry name" value="2-IPM_HCS-like"/>
</dbReference>
<dbReference type="InterPro" id="IPR017629">
    <property type="entry name" value="4OH_2_O-val_aldolase"/>
</dbReference>
<dbReference type="InterPro" id="IPR013785">
    <property type="entry name" value="Aldolase_TIM"/>
</dbReference>
<dbReference type="InterPro" id="IPR012425">
    <property type="entry name" value="DmpG_comm"/>
</dbReference>
<dbReference type="InterPro" id="IPR035685">
    <property type="entry name" value="DRE_TIM_HOA"/>
</dbReference>
<dbReference type="InterPro" id="IPR000891">
    <property type="entry name" value="PYR_CT"/>
</dbReference>
<dbReference type="NCBIfam" id="TIGR03217">
    <property type="entry name" value="4OH_2_O_val_ald"/>
    <property type="match status" value="1"/>
</dbReference>
<dbReference type="NCBIfam" id="NF006049">
    <property type="entry name" value="PRK08195.1"/>
    <property type="match status" value="1"/>
</dbReference>
<dbReference type="PANTHER" id="PTHR10277:SF9">
    <property type="entry name" value="2-ISOPROPYLMALATE SYNTHASE 1, CHLOROPLASTIC-RELATED"/>
    <property type="match status" value="1"/>
</dbReference>
<dbReference type="PANTHER" id="PTHR10277">
    <property type="entry name" value="HOMOCITRATE SYNTHASE-RELATED"/>
    <property type="match status" value="1"/>
</dbReference>
<dbReference type="Pfam" id="PF07836">
    <property type="entry name" value="DmpG_comm"/>
    <property type="match status" value="1"/>
</dbReference>
<dbReference type="Pfam" id="PF00682">
    <property type="entry name" value="HMGL-like"/>
    <property type="match status" value="1"/>
</dbReference>
<dbReference type="SUPFAM" id="SSF51569">
    <property type="entry name" value="Aldolase"/>
    <property type="match status" value="1"/>
</dbReference>
<dbReference type="SUPFAM" id="SSF89000">
    <property type="entry name" value="post-HMGL domain-like"/>
    <property type="match status" value="1"/>
</dbReference>
<dbReference type="PROSITE" id="PS50991">
    <property type="entry name" value="PYR_CT"/>
    <property type="match status" value="1"/>
</dbReference>
<gene>
    <name type="primary">mhpE</name>
    <name type="ordered locus">BURPS1710b_A0890</name>
</gene>
<protein>
    <recommendedName>
        <fullName evidence="1">4-hydroxy-2-oxovalerate aldolase</fullName>
        <shortName evidence="1">HOA</shortName>
        <ecNumber evidence="1">4.1.3.39</ecNumber>
    </recommendedName>
    <alternativeName>
        <fullName evidence="1">4-hydroxy-2-keto-pentanoic acid aldolase</fullName>
    </alternativeName>
    <alternativeName>
        <fullName evidence="1">4-hydroxy-2-oxopentanoate aldolase</fullName>
    </alternativeName>
</protein>
<comment type="catalytic activity">
    <reaction evidence="1">
        <text>(S)-4-hydroxy-2-oxopentanoate = acetaldehyde + pyruvate</text>
        <dbReference type="Rhea" id="RHEA:22624"/>
        <dbReference type="ChEBI" id="CHEBI:15343"/>
        <dbReference type="ChEBI" id="CHEBI:15361"/>
        <dbReference type="ChEBI" id="CHEBI:73143"/>
        <dbReference type="EC" id="4.1.3.39"/>
    </reaction>
</comment>
<comment type="similarity">
    <text evidence="1">Belongs to the 4-hydroxy-2-oxovalerate aldolase family.</text>
</comment>
<proteinExistence type="inferred from homology"/>
<reference key="1">
    <citation type="journal article" date="2010" name="Genome Biol. Evol.">
        <title>Continuing evolution of Burkholderia mallei through genome reduction and large-scale rearrangements.</title>
        <authorList>
            <person name="Losada L."/>
            <person name="Ronning C.M."/>
            <person name="DeShazer D."/>
            <person name="Woods D."/>
            <person name="Fedorova N."/>
            <person name="Kim H.S."/>
            <person name="Shabalina S.A."/>
            <person name="Pearson T.R."/>
            <person name="Brinkac L."/>
            <person name="Tan P."/>
            <person name="Nandi T."/>
            <person name="Crabtree J."/>
            <person name="Badger J."/>
            <person name="Beckstrom-Sternberg S."/>
            <person name="Saqib M."/>
            <person name="Schutzer S.E."/>
            <person name="Keim P."/>
            <person name="Nierman W.C."/>
        </authorList>
    </citation>
    <scope>NUCLEOTIDE SEQUENCE [LARGE SCALE GENOMIC DNA]</scope>
    <source>
        <strain>1710b</strain>
    </source>
</reference>
<accession>Q3JK55</accession>
<name>HOA_BURP1</name>
<feature type="chain" id="PRO_0000387801" description="4-hydroxy-2-oxovalerate aldolase">
    <location>
        <begin position="1"/>
        <end position="347"/>
    </location>
</feature>
<feature type="domain" description="Pyruvate carboxyltransferase" evidence="1">
    <location>
        <begin position="2"/>
        <end position="252"/>
    </location>
</feature>
<feature type="active site" description="Proton acceptor" evidence="1">
    <location>
        <position position="14"/>
    </location>
</feature>
<feature type="binding site" evidence="1">
    <location>
        <begin position="10"/>
        <end position="11"/>
    </location>
    <ligand>
        <name>substrate</name>
    </ligand>
</feature>
<feature type="binding site" evidence="1">
    <location>
        <position position="11"/>
    </location>
    <ligand>
        <name>Mn(2+)</name>
        <dbReference type="ChEBI" id="CHEBI:29035"/>
    </ligand>
</feature>
<feature type="binding site" evidence="1">
    <location>
        <position position="164"/>
    </location>
    <ligand>
        <name>substrate</name>
    </ligand>
</feature>
<feature type="binding site" evidence="1">
    <location>
        <position position="191"/>
    </location>
    <ligand>
        <name>Mn(2+)</name>
        <dbReference type="ChEBI" id="CHEBI:29035"/>
    </ligand>
</feature>
<feature type="binding site" evidence="1">
    <location>
        <position position="191"/>
    </location>
    <ligand>
        <name>substrate</name>
    </ligand>
</feature>
<feature type="binding site" evidence="1">
    <location>
        <position position="193"/>
    </location>
    <ligand>
        <name>Mn(2+)</name>
        <dbReference type="ChEBI" id="CHEBI:29035"/>
    </ligand>
</feature>
<feature type="site" description="Transition state stabilizer" evidence="1">
    <location>
        <position position="10"/>
    </location>
</feature>
<organism>
    <name type="scientific">Burkholderia pseudomallei (strain 1710b)</name>
    <dbReference type="NCBI Taxonomy" id="320372"/>
    <lineage>
        <taxon>Bacteria</taxon>
        <taxon>Pseudomonadati</taxon>
        <taxon>Pseudomonadota</taxon>
        <taxon>Betaproteobacteria</taxon>
        <taxon>Burkholderiales</taxon>
        <taxon>Burkholderiaceae</taxon>
        <taxon>Burkholderia</taxon>
        <taxon>pseudomallei group</taxon>
    </lineage>
</organism>
<evidence type="ECO:0000255" key="1">
    <source>
        <dbReference type="HAMAP-Rule" id="MF_01656"/>
    </source>
</evidence>
<sequence>MILISDATLRDGNHAIRHQLSAAQIHAYARAADEAGIDVVEVGHGNGLGGSSCLLGQTPIGDRLMLETARAALRTSRLGVHFIPGLGKAADISLALEIGVDVVRVATHCTEANVSARFIEQTRAAGRTAFGVLMMSHMAPPDALLAQAKLMERYGAQAVVLMDSAGYSTPSLVRAKVERLVDGLDIDVGFHAHNNLGLAVANSLVALEAGARIVDACVKGFGAGAGNTQLETLVAAMEREGHDTRTTFERVMTLARGTETFLNPKTPHIQPANIASGLYGLFSGYVPHIQKAAQEFGVNEFELYKRLAERKLVAGQEDIIIEEASRLARERDVQRATGGVRVRELSA</sequence>